<feature type="chain" id="PRO_0000267977" description="Large ribosomal subunit protein bL17">
    <location>
        <begin position="1"/>
        <end position="140"/>
    </location>
</feature>
<feature type="region of interest" description="Disordered" evidence="2">
    <location>
        <begin position="119"/>
        <end position="140"/>
    </location>
</feature>
<protein>
    <recommendedName>
        <fullName evidence="1">Large ribosomal subunit protein bL17</fullName>
    </recommendedName>
    <alternativeName>
        <fullName evidence="3">50S ribosomal protein L17</fullName>
    </alternativeName>
</protein>
<organism>
    <name type="scientific">Zymomonas mobilis subsp. mobilis (strain ATCC 31821 / ZM4 / CP4)</name>
    <dbReference type="NCBI Taxonomy" id="264203"/>
    <lineage>
        <taxon>Bacteria</taxon>
        <taxon>Pseudomonadati</taxon>
        <taxon>Pseudomonadota</taxon>
        <taxon>Alphaproteobacteria</taxon>
        <taxon>Sphingomonadales</taxon>
        <taxon>Zymomonadaceae</taxon>
        <taxon>Zymomonas</taxon>
    </lineage>
</organism>
<dbReference type="EMBL" id="AE008692">
    <property type="protein sequence ID" value="AAV89166.1"/>
    <property type="molecule type" value="Genomic_DNA"/>
</dbReference>
<dbReference type="RefSeq" id="WP_011240448.1">
    <property type="nucleotide sequence ID" value="NZ_CP035711.1"/>
</dbReference>
<dbReference type="SMR" id="Q5NQ39"/>
<dbReference type="STRING" id="264203.ZMO0542"/>
<dbReference type="GeneID" id="79904267"/>
<dbReference type="KEGG" id="zmo:ZMO0542"/>
<dbReference type="eggNOG" id="COG0203">
    <property type="taxonomic scope" value="Bacteria"/>
</dbReference>
<dbReference type="HOGENOM" id="CLU_074407_2_0_5"/>
<dbReference type="Proteomes" id="UP000001173">
    <property type="component" value="Chromosome"/>
</dbReference>
<dbReference type="GO" id="GO:0022625">
    <property type="term" value="C:cytosolic large ribosomal subunit"/>
    <property type="evidence" value="ECO:0007669"/>
    <property type="project" value="TreeGrafter"/>
</dbReference>
<dbReference type="GO" id="GO:0003735">
    <property type="term" value="F:structural constituent of ribosome"/>
    <property type="evidence" value="ECO:0007669"/>
    <property type="project" value="InterPro"/>
</dbReference>
<dbReference type="GO" id="GO:0006412">
    <property type="term" value="P:translation"/>
    <property type="evidence" value="ECO:0007669"/>
    <property type="project" value="UniProtKB-UniRule"/>
</dbReference>
<dbReference type="FunFam" id="3.90.1030.10:FF:000001">
    <property type="entry name" value="50S ribosomal protein L17"/>
    <property type="match status" value="1"/>
</dbReference>
<dbReference type="Gene3D" id="3.90.1030.10">
    <property type="entry name" value="Ribosomal protein L17"/>
    <property type="match status" value="1"/>
</dbReference>
<dbReference type="HAMAP" id="MF_01368">
    <property type="entry name" value="Ribosomal_bL17"/>
    <property type="match status" value="1"/>
</dbReference>
<dbReference type="InterPro" id="IPR000456">
    <property type="entry name" value="Ribosomal_bL17"/>
</dbReference>
<dbReference type="InterPro" id="IPR047859">
    <property type="entry name" value="Ribosomal_bL17_CS"/>
</dbReference>
<dbReference type="InterPro" id="IPR036373">
    <property type="entry name" value="Ribosomal_bL17_sf"/>
</dbReference>
<dbReference type="NCBIfam" id="TIGR00059">
    <property type="entry name" value="L17"/>
    <property type="match status" value="1"/>
</dbReference>
<dbReference type="PANTHER" id="PTHR14413:SF16">
    <property type="entry name" value="LARGE RIBOSOMAL SUBUNIT PROTEIN BL17M"/>
    <property type="match status" value="1"/>
</dbReference>
<dbReference type="PANTHER" id="PTHR14413">
    <property type="entry name" value="RIBOSOMAL PROTEIN L17"/>
    <property type="match status" value="1"/>
</dbReference>
<dbReference type="Pfam" id="PF01196">
    <property type="entry name" value="Ribosomal_L17"/>
    <property type="match status" value="1"/>
</dbReference>
<dbReference type="SUPFAM" id="SSF64263">
    <property type="entry name" value="Prokaryotic ribosomal protein L17"/>
    <property type="match status" value="1"/>
</dbReference>
<dbReference type="PROSITE" id="PS01167">
    <property type="entry name" value="RIBOSOMAL_L17"/>
    <property type="match status" value="1"/>
</dbReference>
<proteinExistence type="inferred from homology"/>
<sequence>MRHRVGGRKLQRTSSHRLALFRNQSAALIKHEQIITTLAKARELRPYTEKLITLAKKGGLANRRLAHSRLLDDTQLKKLFDVLAERYKDRNGGYTRIIKAGIRASDAAQMAVIELVDRDTTAKGQDSGPVQVEEQENEEA</sequence>
<reference key="1">
    <citation type="journal article" date="2005" name="Nat. Biotechnol.">
        <title>The genome sequence of the ethanologenic bacterium Zymomonas mobilis ZM4.</title>
        <authorList>
            <person name="Seo J.-S."/>
            <person name="Chong H."/>
            <person name="Park H.S."/>
            <person name="Yoon K.-O."/>
            <person name="Jung C."/>
            <person name="Kim J.J."/>
            <person name="Hong J.H."/>
            <person name="Kim H."/>
            <person name="Kim J.-H."/>
            <person name="Kil J.-I."/>
            <person name="Park C.J."/>
            <person name="Oh H.-M."/>
            <person name="Lee J.-S."/>
            <person name="Jin S.-J."/>
            <person name="Um H.-W."/>
            <person name="Lee H.-J."/>
            <person name="Oh S.-J."/>
            <person name="Kim J.Y."/>
            <person name="Kang H.L."/>
            <person name="Lee S.Y."/>
            <person name="Lee K.J."/>
            <person name="Kang H.S."/>
        </authorList>
    </citation>
    <scope>NUCLEOTIDE SEQUENCE [LARGE SCALE GENOMIC DNA]</scope>
    <source>
        <strain>ATCC 31821 / ZM4 / CP4</strain>
    </source>
</reference>
<evidence type="ECO:0000255" key="1">
    <source>
        <dbReference type="HAMAP-Rule" id="MF_01368"/>
    </source>
</evidence>
<evidence type="ECO:0000256" key="2">
    <source>
        <dbReference type="SAM" id="MobiDB-lite"/>
    </source>
</evidence>
<evidence type="ECO:0000305" key="3"/>
<gene>
    <name evidence="1" type="primary">rplQ</name>
    <name type="ordered locus">ZMO0542</name>
</gene>
<accession>Q5NQ39</accession>
<name>RL17_ZYMMO</name>
<comment type="subunit">
    <text evidence="1">Part of the 50S ribosomal subunit. Contacts protein L32.</text>
</comment>
<comment type="similarity">
    <text evidence="1">Belongs to the bacterial ribosomal protein bL17 family.</text>
</comment>
<keyword id="KW-1185">Reference proteome</keyword>
<keyword id="KW-0687">Ribonucleoprotein</keyword>
<keyword id="KW-0689">Ribosomal protein</keyword>